<name>IHFA_SHESR</name>
<keyword id="KW-0233">DNA recombination</keyword>
<keyword id="KW-0238">DNA-binding</keyword>
<keyword id="KW-0804">Transcription</keyword>
<keyword id="KW-0805">Transcription regulation</keyword>
<keyword id="KW-0810">Translation regulation</keyword>
<feature type="chain" id="PRO_0000277777" description="Integration host factor subunit alpha">
    <location>
        <begin position="1"/>
        <end position="98"/>
    </location>
</feature>
<feature type="region of interest" description="Disordered" evidence="2">
    <location>
        <begin position="49"/>
        <end position="71"/>
    </location>
</feature>
<evidence type="ECO:0000255" key="1">
    <source>
        <dbReference type="HAMAP-Rule" id="MF_00380"/>
    </source>
</evidence>
<evidence type="ECO:0000256" key="2">
    <source>
        <dbReference type="SAM" id="MobiDB-lite"/>
    </source>
</evidence>
<proteinExistence type="inferred from homology"/>
<protein>
    <recommendedName>
        <fullName evidence="1">Integration host factor subunit alpha</fullName>
        <shortName evidence="1">IHF-alpha</shortName>
    </recommendedName>
</protein>
<organism>
    <name type="scientific">Shewanella sp. (strain MR-7)</name>
    <dbReference type="NCBI Taxonomy" id="60481"/>
    <lineage>
        <taxon>Bacteria</taxon>
        <taxon>Pseudomonadati</taxon>
        <taxon>Pseudomonadota</taxon>
        <taxon>Gammaproteobacteria</taxon>
        <taxon>Alteromonadales</taxon>
        <taxon>Shewanellaceae</taxon>
        <taxon>Shewanella</taxon>
    </lineage>
</organism>
<dbReference type="EMBL" id="CP000444">
    <property type="protein sequence ID" value="ABI43155.1"/>
    <property type="molecule type" value="Genomic_DNA"/>
</dbReference>
<dbReference type="SMR" id="Q0HUQ0"/>
<dbReference type="KEGG" id="shm:Shewmr7_2167"/>
<dbReference type="HOGENOM" id="CLU_105066_1_3_6"/>
<dbReference type="GO" id="GO:0005829">
    <property type="term" value="C:cytosol"/>
    <property type="evidence" value="ECO:0007669"/>
    <property type="project" value="TreeGrafter"/>
</dbReference>
<dbReference type="GO" id="GO:0003677">
    <property type="term" value="F:DNA binding"/>
    <property type="evidence" value="ECO:0007669"/>
    <property type="project" value="UniProtKB-UniRule"/>
</dbReference>
<dbReference type="GO" id="GO:0030527">
    <property type="term" value="F:structural constituent of chromatin"/>
    <property type="evidence" value="ECO:0007669"/>
    <property type="project" value="InterPro"/>
</dbReference>
<dbReference type="GO" id="GO:0006310">
    <property type="term" value="P:DNA recombination"/>
    <property type="evidence" value="ECO:0007669"/>
    <property type="project" value="UniProtKB-UniRule"/>
</dbReference>
<dbReference type="GO" id="GO:0009893">
    <property type="term" value="P:positive regulation of metabolic process"/>
    <property type="evidence" value="ECO:0007669"/>
    <property type="project" value="UniProtKB-ARBA"/>
</dbReference>
<dbReference type="GO" id="GO:0006355">
    <property type="term" value="P:regulation of DNA-templated transcription"/>
    <property type="evidence" value="ECO:0007669"/>
    <property type="project" value="UniProtKB-UniRule"/>
</dbReference>
<dbReference type="GO" id="GO:0006417">
    <property type="term" value="P:regulation of translation"/>
    <property type="evidence" value="ECO:0007669"/>
    <property type="project" value="UniProtKB-UniRule"/>
</dbReference>
<dbReference type="CDD" id="cd13835">
    <property type="entry name" value="IHF_A"/>
    <property type="match status" value="1"/>
</dbReference>
<dbReference type="FunFam" id="4.10.520.10:FF:000002">
    <property type="entry name" value="Integration host factor subunit alpha"/>
    <property type="match status" value="1"/>
</dbReference>
<dbReference type="Gene3D" id="4.10.520.10">
    <property type="entry name" value="IHF-like DNA-binding proteins"/>
    <property type="match status" value="1"/>
</dbReference>
<dbReference type="HAMAP" id="MF_00380">
    <property type="entry name" value="IHF_alpha"/>
    <property type="match status" value="1"/>
</dbReference>
<dbReference type="InterPro" id="IPR000119">
    <property type="entry name" value="Hist_DNA-bd"/>
</dbReference>
<dbReference type="InterPro" id="IPR020816">
    <property type="entry name" value="Histone-like_DNA-bd_CS"/>
</dbReference>
<dbReference type="InterPro" id="IPR010992">
    <property type="entry name" value="IHF-like_DNA-bd_dom_sf"/>
</dbReference>
<dbReference type="InterPro" id="IPR005684">
    <property type="entry name" value="IHF_alpha"/>
</dbReference>
<dbReference type="NCBIfam" id="TIGR00987">
    <property type="entry name" value="himA"/>
    <property type="match status" value="1"/>
</dbReference>
<dbReference type="NCBIfam" id="NF001401">
    <property type="entry name" value="PRK00285.1"/>
    <property type="match status" value="1"/>
</dbReference>
<dbReference type="PANTHER" id="PTHR33175">
    <property type="entry name" value="DNA-BINDING PROTEIN HU"/>
    <property type="match status" value="1"/>
</dbReference>
<dbReference type="PANTHER" id="PTHR33175:SF2">
    <property type="entry name" value="INTEGRATION HOST FACTOR SUBUNIT ALPHA"/>
    <property type="match status" value="1"/>
</dbReference>
<dbReference type="Pfam" id="PF00216">
    <property type="entry name" value="Bac_DNA_binding"/>
    <property type="match status" value="1"/>
</dbReference>
<dbReference type="PRINTS" id="PR01727">
    <property type="entry name" value="DNABINDINGHU"/>
</dbReference>
<dbReference type="SMART" id="SM00411">
    <property type="entry name" value="BHL"/>
    <property type="match status" value="1"/>
</dbReference>
<dbReference type="SUPFAM" id="SSF47729">
    <property type="entry name" value="IHF-like DNA-binding proteins"/>
    <property type="match status" value="1"/>
</dbReference>
<dbReference type="PROSITE" id="PS00045">
    <property type="entry name" value="HISTONE_LIKE"/>
    <property type="match status" value="1"/>
</dbReference>
<accession>Q0HUQ0</accession>
<gene>
    <name evidence="1" type="primary">ihfA</name>
    <name evidence="1" type="synonym">himA</name>
    <name type="ordered locus">Shewmr7_2167</name>
</gene>
<comment type="function">
    <text evidence="1">This protein is one of the two subunits of integration host factor, a specific DNA-binding protein that functions in genetic recombination as well as in transcriptional and translational control.</text>
</comment>
<comment type="subunit">
    <text evidence="1">Heterodimer of an alpha and a beta chain.</text>
</comment>
<comment type="similarity">
    <text evidence="1">Belongs to the bacterial histone-like protein family.</text>
</comment>
<sequence length="98" mass="10963">MALTKAEMAEHLFETLGINKRVAKEMVESFFEEIRGALESGEQVKLSGFGNFDLRDKNQRPGRNPKTGEDIPISARRVVTFRPGQKLKTRVEASNAGK</sequence>
<reference key="1">
    <citation type="submission" date="2006-08" db="EMBL/GenBank/DDBJ databases">
        <title>Complete sequence of chromosome 1 of Shewanella sp. MR-7.</title>
        <authorList>
            <person name="Copeland A."/>
            <person name="Lucas S."/>
            <person name="Lapidus A."/>
            <person name="Barry K."/>
            <person name="Detter J.C."/>
            <person name="Glavina del Rio T."/>
            <person name="Hammon N."/>
            <person name="Israni S."/>
            <person name="Dalin E."/>
            <person name="Tice H."/>
            <person name="Pitluck S."/>
            <person name="Kiss H."/>
            <person name="Brettin T."/>
            <person name="Bruce D."/>
            <person name="Han C."/>
            <person name="Tapia R."/>
            <person name="Gilna P."/>
            <person name="Schmutz J."/>
            <person name="Larimer F."/>
            <person name="Land M."/>
            <person name="Hauser L."/>
            <person name="Kyrpides N."/>
            <person name="Mikhailova N."/>
            <person name="Nealson K."/>
            <person name="Konstantinidis K."/>
            <person name="Klappenbach J."/>
            <person name="Tiedje J."/>
            <person name="Richardson P."/>
        </authorList>
    </citation>
    <scope>NUCLEOTIDE SEQUENCE [LARGE SCALE GENOMIC DNA]</scope>
    <source>
        <strain>MR-7</strain>
    </source>
</reference>